<comment type="catalytic activity">
    <reaction evidence="1">
        <text>urea + 2 H2O + H(+) = hydrogencarbonate + 2 NH4(+)</text>
        <dbReference type="Rhea" id="RHEA:20557"/>
        <dbReference type="ChEBI" id="CHEBI:15377"/>
        <dbReference type="ChEBI" id="CHEBI:15378"/>
        <dbReference type="ChEBI" id="CHEBI:16199"/>
        <dbReference type="ChEBI" id="CHEBI:17544"/>
        <dbReference type="ChEBI" id="CHEBI:28938"/>
        <dbReference type="EC" id="3.5.1.5"/>
    </reaction>
</comment>
<comment type="pathway">
    <text evidence="1">Nitrogen metabolism; urea degradation; CO(2) and NH(3) from urea (urease route): step 1/1.</text>
</comment>
<comment type="subunit">
    <text evidence="1">Heterotrimer of UreA (gamma), UreB (beta) and UreC (alpha) subunits. Three heterotrimers associate to form the active enzyme.</text>
</comment>
<comment type="subcellular location">
    <subcellularLocation>
        <location evidence="1">Cytoplasm</location>
    </subcellularLocation>
</comment>
<comment type="similarity">
    <text evidence="1">Belongs to the urease beta subunit family.</text>
</comment>
<keyword id="KW-0963">Cytoplasm</keyword>
<keyword id="KW-0378">Hydrolase</keyword>
<feature type="chain" id="PRO_0000067590" description="Urease subunit beta">
    <location>
        <begin position="1"/>
        <end position="136"/>
    </location>
</feature>
<feature type="region of interest" description="Disordered" evidence="2">
    <location>
        <begin position="112"/>
        <end position="136"/>
    </location>
</feature>
<evidence type="ECO:0000255" key="1">
    <source>
        <dbReference type="HAMAP-Rule" id="MF_01954"/>
    </source>
</evidence>
<evidence type="ECO:0000256" key="2">
    <source>
        <dbReference type="SAM" id="MobiDB-lite"/>
    </source>
</evidence>
<proteinExistence type="inferred from homology"/>
<dbReference type="EC" id="3.5.1.5" evidence="1"/>
<dbReference type="EMBL" id="BX571856">
    <property type="protein sequence ID" value="CAG41354.1"/>
    <property type="molecule type" value="Genomic_DNA"/>
</dbReference>
<dbReference type="RefSeq" id="WP_000612132.1">
    <property type="nucleotide sequence ID" value="NC_002952.2"/>
</dbReference>
<dbReference type="SMR" id="Q6GEE5"/>
<dbReference type="KEGG" id="sar:SAR2373"/>
<dbReference type="HOGENOM" id="CLU_129707_2_2_9"/>
<dbReference type="UniPathway" id="UPA00258">
    <property type="reaction ID" value="UER00370"/>
</dbReference>
<dbReference type="Proteomes" id="UP000000596">
    <property type="component" value="Chromosome"/>
</dbReference>
<dbReference type="GO" id="GO:0035550">
    <property type="term" value="C:urease complex"/>
    <property type="evidence" value="ECO:0007669"/>
    <property type="project" value="InterPro"/>
</dbReference>
<dbReference type="GO" id="GO:0009039">
    <property type="term" value="F:urease activity"/>
    <property type="evidence" value="ECO:0007669"/>
    <property type="project" value="UniProtKB-UniRule"/>
</dbReference>
<dbReference type="GO" id="GO:0043419">
    <property type="term" value="P:urea catabolic process"/>
    <property type="evidence" value="ECO:0007669"/>
    <property type="project" value="UniProtKB-UniRule"/>
</dbReference>
<dbReference type="CDD" id="cd00407">
    <property type="entry name" value="Urease_beta"/>
    <property type="match status" value="1"/>
</dbReference>
<dbReference type="FunFam" id="2.10.150.10:FF:000001">
    <property type="entry name" value="Urease subunit beta"/>
    <property type="match status" value="1"/>
</dbReference>
<dbReference type="Gene3D" id="2.10.150.10">
    <property type="entry name" value="Urease, beta subunit"/>
    <property type="match status" value="1"/>
</dbReference>
<dbReference type="HAMAP" id="MF_01954">
    <property type="entry name" value="Urease_beta"/>
    <property type="match status" value="1"/>
</dbReference>
<dbReference type="InterPro" id="IPR002019">
    <property type="entry name" value="Urease_beta-like"/>
</dbReference>
<dbReference type="InterPro" id="IPR036461">
    <property type="entry name" value="Urease_betasu_sf"/>
</dbReference>
<dbReference type="InterPro" id="IPR050069">
    <property type="entry name" value="Urease_subunit"/>
</dbReference>
<dbReference type="NCBIfam" id="NF009682">
    <property type="entry name" value="PRK13203.1"/>
    <property type="match status" value="1"/>
</dbReference>
<dbReference type="NCBIfam" id="TIGR00192">
    <property type="entry name" value="urease_beta"/>
    <property type="match status" value="1"/>
</dbReference>
<dbReference type="PANTHER" id="PTHR33569">
    <property type="entry name" value="UREASE"/>
    <property type="match status" value="1"/>
</dbReference>
<dbReference type="PANTHER" id="PTHR33569:SF1">
    <property type="entry name" value="UREASE"/>
    <property type="match status" value="1"/>
</dbReference>
<dbReference type="Pfam" id="PF00699">
    <property type="entry name" value="Urease_beta"/>
    <property type="match status" value="1"/>
</dbReference>
<dbReference type="SUPFAM" id="SSF51278">
    <property type="entry name" value="Urease, beta-subunit"/>
    <property type="match status" value="1"/>
</dbReference>
<gene>
    <name evidence="1" type="primary">ureB</name>
    <name type="ordered locus">SAR2373</name>
</gene>
<reference key="1">
    <citation type="journal article" date="2004" name="Proc. Natl. Acad. Sci. U.S.A.">
        <title>Complete genomes of two clinical Staphylococcus aureus strains: evidence for the rapid evolution of virulence and drug resistance.</title>
        <authorList>
            <person name="Holden M.T.G."/>
            <person name="Feil E.J."/>
            <person name="Lindsay J.A."/>
            <person name="Peacock S.J."/>
            <person name="Day N.P.J."/>
            <person name="Enright M.C."/>
            <person name="Foster T.J."/>
            <person name="Moore C.E."/>
            <person name="Hurst L."/>
            <person name="Atkin R."/>
            <person name="Barron A."/>
            <person name="Bason N."/>
            <person name="Bentley S.D."/>
            <person name="Chillingworth C."/>
            <person name="Chillingworth T."/>
            <person name="Churcher C."/>
            <person name="Clark L."/>
            <person name="Corton C."/>
            <person name="Cronin A."/>
            <person name="Doggett J."/>
            <person name="Dowd L."/>
            <person name="Feltwell T."/>
            <person name="Hance Z."/>
            <person name="Harris B."/>
            <person name="Hauser H."/>
            <person name="Holroyd S."/>
            <person name="Jagels K."/>
            <person name="James K.D."/>
            <person name="Lennard N."/>
            <person name="Line A."/>
            <person name="Mayes R."/>
            <person name="Moule S."/>
            <person name="Mungall K."/>
            <person name="Ormond D."/>
            <person name="Quail M.A."/>
            <person name="Rabbinowitsch E."/>
            <person name="Rutherford K.M."/>
            <person name="Sanders M."/>
            <person name="Sharp S."/>
            <person name="Simmonds M."/>
            <person name="Stevens K."/>
            <person name="Whitehead S."/>
            <person name="Barrell B.G."/>
            <person name="Spratt B.G."/>
            <person name="Parkhill J."/>
        </authorList>
    </citation>
    <scope>NUCLEOTIDE SEQUENCE [LARGE SCALE GENOMIC DNA]</scope>
    <source>
        <strain>MRSA252</strain>
    </source>
</reference>
<sequence>MIPGEIITKSTEVEINNHHPETVIEVENTGDRPIQVGSHFHFYEANAALDFEREMAYGKHLDIPAGAAVRFEPGDKKEVQLVEYAGKRKIFGFRGMVNGPIDESRVYRPTDENDEYAGVFGDNGTENVNKKGGKRS</sequence>
<protein>
    <recommendedName>
        <fullName evidence="1">Urease subunit beta</fullName>
        <ecNumber evidence="1">3.5.1.5</ecNumber>
    </recommendedName>
    <alternativeName>
        <fullName evidence="1">Urea amidohydrolase subunit beta</fullName>
    </alternativeName>
</protein>
<name>URE2_STAAR</name>
<organism>
    <name type="scientific">Staphylococcus aureus (strain MRSA252)</name>
    <dbReference type="NCBI Taxonomy" id="282458"/>
    <lineage>
        <taxon>Bacteria</taxon>
        <taxon>Bacillati</taxon>
        <taxon>Bacillota</taxon>
        <taxon>Bacilli</taxon>
        <taxon>Bacillales</taxon>
        <taxon>Staphylococcaceae</taxon>
        <taxon>Staphylococcus</taxon>
    </lineage>
</organism>
<accession>Q6GEE5</accession>